<evidence type="ECO:0000255" key="1">
    <source>
        <dbReference type="HAMAP-Rule" id="MF_01034"/>
    </source>
</evidence>
<dbReference type="EC" id="3.4.16.4" evidence="1"/>
<dbReference type="EMBL" id="CP001113">
    <property type="protein sequence ID" value="ACF64303.1"/>
    <property type="molecule type" value="Genomic_DNA"/>
</dbReference>
<dbReference type="SMR" id="B4T0K5"/>
<dbReference type="MEROPS" id="S12.A03"/>
<dbReference type="KEGG" id="see:SNSL254_A2671"/>
<dbReference type="HOGENOM" id="CLU_020027_1_2_6"/>
<dbReference type="Proteomes" id="UP000008824">
    <property type="component" value="Chromosome"/>
</dbReference>
<dbReference type="GO" id="GO:0005886">
    <property type="term" value="C:plasma membrane"/>
    <property type="evidence" value="ECO:0007669"/>
    <property type="project" value="UniProtKB-SubCell"/>
</dbReference>
<dbReference type="GO" id="GO:0009002">
    <property type="term" value="F:serine-type D-Ala-D-Ala carboxypeptidase activity"/>
    <property type="evidence" value="ECO:0007669"/>
    <property type="project" value="UniProtKB-UniRule"/>
</dbReference>
<dbReference type="GO" id="GO:0006508">
    <property type="term" value="P:proteolysis"/>
    <property type="evidence" value="ECO:0007669"/>
    <property type="project" value="UniProtKB-KW"/>
</dbReference>
<dbReference type="Gene3D" id="3.40.710.10">
    <property type="entry name" value="DD-peptidase/beta-lactamase superfamily"/>
    <property type="match status" value="1"/>
</dbReference>
<dbReference type="HAMAP" id="MF_01034">
    <property type="entry name" value="S12_YfeW"/>
    <property type="match status" value="1"/>
</dbReference>
<dbReference type="InterPro" id="IPR001466">
    <property type="entry name" value="Beta-lactam-related"/>
</dbReference>
<dbReference type="InterPro" id="IPR012338">
    <property type="entry name" value="Beta-lactam/transpept-like"/>
</dbReference>
<dbReference type="InterPro" id="IPR050789">
    <property type="entry name" value="Diverse_Enzym_Activities"/>
</dbReference>
<dbReference type="InterPro" id="IPR022849">
    <property type="entry name" value="Pept_S12_YfeW/YbbE-like"/>
</dbReference>
<dbReference type="NCBIfam" id="NF002968">
    <property type="entry name" value="PRK03642.1"/>
    <property type="match status" value="1"/>
</dbReference>
<dbReference type="PANTHER" id="PTHR43283">
    <property type="entry name" value="BETA-LACTAMASE-RELATED"/>
    <property type="match status" value="1"/>
</dbReference>
<dbReference type="PANTHER" id="PTHR43283:SF11">
    <property type="entry name" value="BETA-LACTAMASE-RELATED DOMAIN-CONTAINING PROTEIN"/>
    <property type="match status" value="1"/>
</dbReference>
<dbReference type="Pfam" id="PF00144">
    <property type="entry name" value="Beta-lactamase"/>
    <property type="match status" value="1"/>
</dbReference>
<dbReference type="SUPFAM" id="SSF56601">
    <property type="entry name" value="beta-lactamase/transpeptidase-like"/>
    <property type="match status" value="1"/>
</dbReference>
<keyword id="KW-0121">Carboxypeptidase</keyword>
<keyword id="KW-0997">Cell inner membrane</keyword>
<keyword id="KW-1003">Cell membrane</keyword>
<keyword id="KW-0378">Hydrolase</keyword>
<keyword id="KW-0472">Membrane</keyword>
<keyword id="KW-0645">Protease</keyword>
<keyword id="KW-0812">Transmembrane</keyword>
<keyword id="KW-1133">Transmembrane helix</keyword>
<name>YFEW_SALNS</name>
<reference key="1">
    <citation type="journal article" date="2011" name="J. Bacteriol.">
        <title>Comparative genomics of 28 Salmonella enterica isolates: evidence for CRISPR-mediated adaptive sublineage evolution.</title>
        <authorList>
            <person name="Fricke W.F."/>
            <person name="Mammel M.K."/>
            <person name="McDermott P.F."/>
            <person name="Tartera C."/>
            <person name="White D.G."/>
            <person name="Leclerc J.E."/>
            <person name="Ravel J."/>
            <person name="Cebula T.A."/>
        </authorList>
    </citation>
    <scope>NUCLEOTIDE SEQUENCE [LARGE SCALE GENOMIC DNA]</scope>
    <source>
        <strain>SL254</strain>
    </source>
</reference>
<organism>
    <name type="scientific">Salmonella newport (strain SL254)</name>
    <dbReference type="NCBI Taxonomy" id="423368"/>
    <lineage>
        <taxon>Bacteria</taxon>
        <taxon>Pseudomonadati</taxon>
        <taxon>Pseudomonadota</taxon>
        <taxon>Gammaproteobacteria</taxon>
        <taxon>Enterobacterales</taxon>
        <taxon>Enterobacteriaceae</taxon>
        <taxon>Salmonella</taxon>
    </lineage>
</organism>
<protein>
    <recommendedName>
        <fullName evidence="1">Putative D-alanyl-D-alanine carboxypeptidase</fullName>
        <ecNumber evidence="1">3.4.16.4</ecNumber>
    </recommendedName>
    <alternativeName>
        <fullName evidence="1">DD-carboxypeptidase</fullName>
        <shortName evidence="1">DD-CPase</shortName>
    </alternativeName>
</protein>
<proteinExistence type="inferred from homology"/>
<gene>
    <name evidence="1" type="primary">yfeW</name>
    <name type="ordered locus">SNSL254_A2671</name>
</gene>
<comment type="catalytic activity">
    <reaction evidence="1">
        <text>Preferential cleavage: (Ac)2-L-Lys-D-Ala-|-D-Ala. Also transpeptidation of peptidyl-alanyl moieties that are N-acyl substituents of D-alanine.</text>
        <dbReference type="EC" id="3.4.16.4"/>
    </reaction>
</comment>
<comment type="subcellular location">
    <subcellularLocation>
        <location evidence="1">Cell inner membrane</location>
        <topology evidence="1">Single-pass membrane protein</topology>
    </subcellularLocation>
</comment>
<comment type="similarity">
    <text evidence="1">Belongs to the peptidase S12 family. YfeW subfamily.</text>
</comment>
<feature type="chain" id="PRO_1000149443" description="Putative D-alanyl-D-alanine carboxypeptidase">
    <location>
        <begin position="1"/>
        <end position="432"/>
    </location>
</feature>
<feature type="transmembrane region" description="Helical; Signal-anchor" evidence="1">
    <location>
        <begin position="7"/>
        <end position="25"/>
    </location>
</feature>
<accession>B4T0K5</accession>
<sequence>MKFTLVATVLLTFSLSAFAVEYPVLTTASPDQVGFDSQKLHRLDGWIQNQIDAGYPSINLLVIKDNHIVLQKAWGYAKKYDGSTLLAHPIRATTNTMYDLASNTKMYATNFALQKLVYEGKIDVNDLVSKYIPGFKDMPGDKIKGKDKLRIIDILHHVAGFPADPQYPNKNVAGKLFSQSKSTTLEMIKKTPLEYQPGSKHIYSDVDYMILGFIIESITAMPLDRYVETTIYKPLGLKHTVFNPLMKGFTPPQIAATELHGNTRDGVIHFPNIRTNTLWGQVHDEKAWYSMGGVSGHAGLFSDTHDMAVLMQVMLNGGGYGNVKLFDDKTVAQFTRRSPEDATFGLGWRVNGNASMTPTFGVLASPQTYGHTGWTGTLTSIDPVNHMAIVILGNRPHSPVANPKVNPNVFVSGLLPAATYGWIVDQIYGSLK</sequence>